<keyword id="KW-0001">2Fe-2S</keyword>
<keyword id="KW-0963">Cytoplasm</keyword>
<keyword id="KW-0408">Iron</keyword>
<keyword id="KW-0411">Iron-sulfur</keyword>
<keyword id="KW-0479">Metal-binding</keyword>
<keyword id="KW-0663">Pyridoxal phosphate</keyword>
<keyword id="KW-0808">Transferase</keyword>
<organism>
    <name type="scientific">Rickettsia typhi (strain ATCC VR-144 / Wilmington)</name>
    <dbReference type="NCBI Taxonomy" id="257363"/>
    <lineage>
        <taxon>Bacteria</taxon>
        <taxon>Pseudomonadati</taxon>
        <taxon>Pseudomonadota</taxon>
        <taxon>Alphaproteobacteria</taxon>
        <taxon>Rickettsiales</taxon>
        <taxon>Rickettsiaceae</taxon>
        <taxon>Rickettsieae</taxon>
        <taxon>Rickettsia</taxon>
        <taxon>typhus group</taxon>
    </lineage>
</organism>
<comment type="function">
    <text evidence="1">Master enzyme that delivers sulfur to a number of partners involved in Fe-S cluster assembly, tRNA modification or cofactor biosynthesis. Catalyzes the removal of elemental sulfur atoms from cysteine to produce alanine. Functions as a sulfur delivery protein for Fe-S cluster synthesis onto IscU, an Fe-S scaffold assembly protein, as well as other S acceptor proteins.</text>
</comment>
<comment type="catalytic activity">
    <reaction evidence="1">
        <text>(sulfur carrier)-H + L-cysteine = (sulfur carrier)-SH + L-alanine</text>
        <dbReference type="Rhea" id="RHEA:43892"/>
        <dbReference type="Rhea" id="RHEA-COMP:14737"/>
        <dbReference type="Rhea" id="RHEA-COMP:14739"/>
        <dbReference type="ChEBI" id="CHEBI:29917"/>
        <dbReference type="ChEBI" id="CHEBI:35235"/>
        <dbReference type="ChEBI" id="CHEBI:57972"/>
        <dbReference type="ChEBI" id="CHEBI:64428"/>
        <dbReference type="EC" id="2.8.1.7"/>
    </reaction>
</comment>
<comment type="cofactor">
    <cofactor evidence="1">
        <name>pyridoxal 5'-phosphate</name>
        <dbReference type="ChEBI" id="CHEBI:597326"/>
    </cofactor>
</comment>
<comment type="pathway">
    <text evidence="1">Cofactor biosynthesis; iron-sulfur cluster biosynthesis.</text>
</comment>
<comment type="subunit">
    <text evidence="1">Homodimer. Forms a heterotetramer with IscU, interacts with other sulfur acceptors.</text>
</comment>
<comment type="subcellular location">
    <subcellularLocation>
        <location evidence="1">Cytoplasm</location>
    </subcellularLocation>
</comment>
<comment type="similarity">
    <text evidence="1">Belongs to the class-V pyridoxal-phosphate-dependent aminotransferase family. NifS/IscS subfamily.</text>
</comment>
<accession>Q68WP6</accession>
<proteinExistence type="inferred from homology"/>
<feature type="chain" id="PRO_0000277975" description="Cysteine desulfurase IscS">
    <location>
        <begin position="1"/>
        <end position="410"/>
    </location>
</feature>
<feature type="active site" description="Cysteine persulfide intermediate" evidence="1">
    <location>
        <position position="334"/>
    </location>
</feature>
<feature type="binding site" evidence="1">
    <location>
        <begin position="80"/>
        <end position="81"/>
    </location>
    <ligand>
        <name>pyridoxal 5'-phosphate</name>
        <dbReference type="ChEBI" id="CHEBI:597326"/>
    </ligand>
</feature>
<feature type="binding site" evidence="1">
    <location>
        <position position="160"/>
    </location>
    <ligand>
        <name>pyridoxal 5'-phosphate</name>
        <dbReference type="ChEBI" id="CHEBI:597326"/>
    </ligand>
</feature>
<feature type="binding site" evidence="1">
    <location>
        <position position="188"/>
    </location>
    <ligand>
        <name>pyridoxal 5'-phosphate</name>
        <dbReference type="ChEBI" id="CHEBI:597326"/>
    </ligand>
</feature>
<feature type="binding site" evidence="1">
    <location>
        <begin position="208"/>
        <end position="210"/>
    </location>
    <ligand>
        <name>pyridoxal 5'-phosphate</name>
        <dbReference type="ChEBI" id="CHEBI:597326"/>
    </ligand>
</feature>
<feature type="binding site" evidence="1">
    <location>
        <position position="248"/>
    </location>
    <ligand>
        <name>pyridoxal 5'-phosphate</name>
        <dbReference type="ChEBI" id="CHEBI:597326"/>
    </ligand>
</feature>
<feature type="binding site" description="via persulfide group" evidence="1">
    <location>
        <position position="334"/>
    </location>
    <ligand>
        <name>[2Fe-2S] cluster</name>
        <dbReference type="ChEBI" id="CHEBI:190135"/>
        <note>ligand shared with IscU</note>
    </ligand>
</feature>
<feature type="modified residue" description="N6-(pyridoxal phosphate)lysine" evidence="1">
    <location>
        <position position="211"/>
    </location>
</feature>
<evidence type="ECO:0000255" key="1">
    <source>
        <dbReference type="HAMAP-Rule" id="MF_00331"/>
    </source>
</evidence>
<name>ISCS_RICTY</name>
<sequence>MNQQLKNLTLPIYMDYQSTTPIDPRVMEAMLPYFTTKFGNPHSRSHSFGWEAENAVENARSMIAKLIGADSKEIIFTSGATESNNLVIKGIAKFYGNKKNHIITLVSEHKCVLNACRYLEQEGIKITYLPIKPNGIIDLEILKNAITDQTLLVSVMAVNNEIGVIQPLREIGKICRERSVFFHSDIAQGFGKIPINVNEYNIDLASISGHKIYGPKGIGALYIRKKPRVRVTPLINGGGQERGMRSGTLPTPLIVGFGIAAEISYNEMEKDAQHVNYLFDRFLNNIYSRIPEVYLNGDKDQRYKGNLNLSFAGVEGESIILAIKDLAVSSGSACTSASLEPSYVLRSIGISEELAHTSIRFGIGRFTTEQEIDYAVNLICSKIDKLRKLSPLWEMMQEGIDLKKIKWTAH</sequence>
<gene>
    <name evidence="1" type="primary">iscS</name>
    <name type="ordered locus">RT0473</name>
</gene>
<dbReference type="EC" id="2.8.1.7" evidence="1"/>
<dbReference type="EMBL" id="AE017197">
    <property type="protein sequence ID" value="AAU03946.1"/>
    <property type="molecule type" value="Genomic_DNA"/>
</dbReference>
<dbReference type="RefSeq" id="WP_011190929.1">
    <property type="nucleotide sequence ID" value="NC_006142.1"/>
</dbReference>
<dbReference type="SMR" id="Q68WP6"/>
<dbReference type="KEGG" id="rty:RT0473"/>
<dbReference type="eggNOG" id="COG1104">
    <property type="taxonomic scope" value="Bacteria"/>
</dbReference>
<dbReference type="HOGENOM" id="CLU_003433_0_2_5"/>
<dbReference type="OrthoDB" id="9808002at2"/>
<dbReference type="UniPathway" id="UPA00266"/>
<dbReference type="Proteomes" id="UP000000604">
    <property type="component" value="Chromosome"/>
</dbReference>
<dbReference type="GO" id="GO:1990221">
    <property type="term" value="C:L-cysteine desulfurase complex"/>
    <property type="evidence" value="ECO:0007669"/>
    <property type="project" value="UniProtKB-ARBA"/>
</dbReference>
<dbReference type="GO" id="GO:0051537">
    <property type="term" value="F:2 iron, 2 sulfur cluster binding"/>
    <property type="evidence" value="ECO:0007669"/>
    <property type="project" value="UniProtKB-UniRule"/>
</dbReference>
<dbReference type="GO" id="GO:0031071">
    <property type="term" value="F:cysteine desulfurase activity"/>
    <property type="evidence" value="ECO:0007669"/>
    <property type="project" value="UniProtKB-UniRule"/>
</dbReference>
<dbReference type="GO" id="GO:0046872">
    <property type="term" value="F:metal ion binding"/>
    <property type="evidence" value="ECO:0007669"/>
    <property type="project" value="UniProtKB-KW"/>
</dbReference>
<dbReference type="GO" id="GO:0030170">
    <property type="term" value="F:pyridoxal phosphate binding"/>
    <property type="evidence" value="ECO:0007669"/>
    <property type="project" value="UniProtKB-UniRule"/>
</dbReference>
<dbReference type="GO" id="GO:0044571">
    <property type="term" value="P:[2Fe-2S] cluster assembly"/>
    <property type="evidence" value="ECO:0007669"/>
    <property type="project" value="UniProtKB-UniRule"/>
</dbReference>
<dbReference type="FunFam" id="3.40.640.10:FF:000003">
    <property type="entry name" value="Cysteine desulfurase IscS"/>
    <property type="match status" value="1"/>
</dbReference>
<dbReference type="FunFam" id="3.90.1150.10:FF:000002">
    <property type="entry name" value="Cysteine desulfurase IscS"/>
    <property type="match status" value="1"/>
</dbReference>
<dbReference type="Gene3D" id="3.90.1150.10">
    <property type="entry name" value="Aspartate Aminotransferase, domain 1"/>
    <property type="match status" value="1"/>
</dbReference>
<dbReference type="Gene3D" id="3.40.640.10">
    <property type="entry name" value="Type I PLP-dependent aspartate aminotransferase-like (Major domain)"/>
    <property type="match status" value="1"/>
</dbReference>
<dbReference type="HAMAP" id="MF_00331">
    <property type="entry name" value="Cys_desulf_IscS"/>
    <property type="match status" value="1"/>
</dbReference>
<dbReference type="InterPro" id="IPR000192">
    <property type="entry name" value="Aminotrans_V_dom"/>
</dbReference>
<dbReference type="InterPro" id="IPR020578">
    <property type="entry name" value="Aminotrans_V_PyrdxlP_BS"/>
</dbReference>
<dbReference type="InterPro" id="IPR010240">
    <property type="entry name" value="Cys_deSase_IscS"/>
</dbReference>
<dbReference type="InterPro" id="IPR016454">
    <property type="entry name" value="Cysteine_dSase"/>
</dbReference>
<dbReference type="InterPro" id="IPR015424">
    <property type="entry name" value="PyrdxlP-dep_Trfase"/>
</dbReference>
<dbReference type="InterPro" id="IPR015421">
    <property type="entry name" value="PyrdxlP-dep_Trfase_major"/>
</dbReference>
<dbReference type="InterPro" id="IPR015422">
    <property type="entry name" value="PyrdxlP-dep_Trfase_small"/>
</dbReference>
<dbReference type="NCBIfam" id="TIGR02006">
    <property type="entry name" value="IscS"/>
    <property type="match status" value="1"/>
</dbReference>
<dbReference type="NCBIfam" id="NF002806">
    <property type="entry name" value="PRK02948.1"/>
    <property type="match status" value="1"/>
</dbReference>
<dbReference type="NCBIfam" id="NF010611">
    <property type="entry name" value="PRK14012.1"/>
    <property type="match status" value="1"/>
</dbReference>
<dbReference type="PANTHER" id="PTHR11601:SF34">
    <property type="entry name" value="CYSTEINE DESULFURASE"/>
    <property type="match status" value="1"/>
</dbReference>
<dbReference type="PANTHER" id="PTHR11601">
    <property type="entry name" value="CYSTEINE DESULFURYLASE FAMILY MEMBER"/>
    <property type="match status" value="1"/>
</dbReference>
<dbReference type="Pfam" id="PF00266">
    <property type="entry name" value="Aminotran_5"/>
    <property type="match status" value="1"/>
</dbReference>
<dbReference type="PIRSF" id="PIRSF005572">
    <property type="entry name" value="NifS"/>
    <property type="match status" value="1"/>
</dbReference>
<dbReference type="SUPFAM" id="SSF53383">
    <property type="entry name" value="PLP-dependent transferases"/>
    <property type="match status" value="1"/>
</dbReference>
<dbReference type="PROSITE" id="PS00595">
    <property type="entry name" value="AA_TRANSFER_CLASS_5"/>
    <property type="match status" value="1"/>
</dbReference>
<protein>
    <recommendedName>
        <fullName evidence="1">Cysteine desulfurase IscS</fullName>
        <ecNumber evidence="1">2.8.1.7</ecNumber>
    </recommendedName>
</protein>
<reference key="1">
    <citation type="journal article" date="2004" name="J. Bacteriol.">
        <title>Complete genome sequence of Rickettsia typhi and comparison with sequences of other Rickettsiae.</title>
        <authorList>
            <person name="McLeod M.P."/>
            <person name="Qin X."/>
            <person name="Karpathy S.E."/>
            <person name="Gioia J."/>
            <person name="Highlander S.K."/>
            <person name="Fox G.E."/>
            <person name="McNeill T.Z."/>
            <person name="Jiang H."/>
            <person name="Muzny D."/>
            <person name="Jacob L.S."/>
            <person name="Hawes A.C."/>
            <person name="Sodergren E."/>
            <person name="Gill R."/>
            <person name="Hume J."/>
            <person name="Morgan M."/>
            <person name="Fan G."/>
            <person name="Amin A.G."/>
            <person name="Gibbs R.A."/>
            <person name="Hong C."/>
            <person name="Yu X.-J."/>
            <person name="Walker D.H."/>
            <person name="Weinstock G.M."/>
        </authorList>
    </citation>
    <scope>NUCLEOTIDE SEQUENCE [LARGE SCALE GENOMIC DNA]</scope>
    <source>
        <strain>ATCC VR-144 / Wilmington</strain>
    </source>
</reference>